<dbReference type="EMBL" id="M81409">
    <property type="protein sequence ID" value="AAA19704.1"/>
    <property type="molecule type" value="Unassigned_DNA"/>
</dbReference>
<dbReference type="SMR" id="P68258"/>
<dbReference type="GO" id="GO:0072562">
    <property type="term" value="C:blood microparticle"/>
    <property type="evidence" value="ECO:0007669"/>
    <property type="project" value="TreeGrafter"/>
</dbReference>
<dbReference type="GO" id="GO:0031838">
    <property type="term" value="C:haptoglobin-hemoglobin complex"/>
    <property type="evidence" value="ECO:0007669"/>
    <property type="project" value="TreeGrafter"/>
</dbReference>
<dbReference type="GO" id="GO:0005833">
    <property type="term" value="C:hemoglobin complex"/>
    <property type="evidence" value="ECO:0007669"/>
    <property type="project" value="InterPro"/>
</dbReference>
<dbReference type="GO" id="GO:0031720">
    <property type="term" value="F:haptoglobin binding"/>
    <property type="evidence" value="ECO:0007669"/>
    <property type="project" value="TreeGrafter"/>
</dbReference>
<dbReference type="GO" id="GO:0020037">
    <property type="term" value="F:heme binding"/>
    <property type="evidence" value="ECO:0007669"/>
    <property type="project" value="InterPro"/>
</dbReference>
<dbReference type="GO" id="GO:0031721">
    <property type="term" value="F:hemoglobin alpha binding"/>
    <property type="evidence" value="ECO:0007669"/>
    <property type="project" value="TreeGrafter"/>
</dbReference>
<dbReference type="GO" id="GO:0046872">
    <property type="term" value="F:metal ion binding"/>
    <property type="evidence" value="ECO:0007669"/>
    <property type="project" value="UniProtKB-KW"/>
</dbReference>
<dbReference type="GO" id="GO:0043177">
    <property type="term" value="F:organic acid binding"/>
    <property type="evidence" value="ECO:0007669"/>
    <property type="project" value="TreeGrafter"/>
</dbReference>
<dbReference type="GO" id="GO:0019825">
    <property type="term" value="F:oxygen binding"/>
    <property type="evidence" value="ECO:0007669"/>
    <property type="project" value="InterPro"/>
</dbReference>
<dbReference type="GO" id="GO:0005344">
    <property type="term" value="F:oxygen carrier activity"/>
    <property type="evidence" value="ECO:0007669"/>
    <property type="project" value="UniProtKB-KW"/>
</dbReference>
<dbReference type="GO" id="GO:0004601">
    <property type="term" value="F:peroxidase activity"/>
    <property type="evidence" value="ECO:0007669"/>
    <property type="project" value="TreeGrafter"/>
</dbReference>
<dbReference type="GO" id="GO:0042744">
    <property type="term" value="P:hydrogen peroxide catabolic process"/>
    <property type="evidence" value="ECO:0007669"/>
    <property type="project" value="TreeGrafter"/>
</dbReference>
<dbReference type="CDD" id="cd08925">
    <property type="entry name" value="Hb-beta-like"/>
    <property type="match status" value="1"/>
</dbReference>
<dbReference type="FunFam" id="1.10.490.10:FF:000001">
    <property type="entry name" value="Hemoglobin subunit beta"/>
    <property type="match status" value="1"/>
</dbReference>
<dbReference type="Gene3D" id="1.10.490.10">
    <property type="entry name" value="Globins"/>
    <property type="match status" value="1"/>
</dbReference>
<dbReference type="InterPro" id="IPR000971">
    <property type="entry name" value="Globin"/>
</dbReference>
<dbReference type="InterPro" id="IPR009050">
    <property type="entry name" value="Globin-like_sf"/>
</dbReference>
<dbReference type="InterPro" id="IPR012292">
    <property type="entry name" value="Globin/Proto"/>
</dbReference>
<dbReference type="InterPro" id="IPR002337">
    <property type="entry name" value="Hemoglobin_b"/>
</dbReference>
<dbReference type="InterPro" id="IPR050056">
    <property type="entry name" value="Hemoglobin_oxygen_transport"/>
</dbReference>
<dbReference type="PANTHER" id="PTHR11442">
    <property type="entry name" value="HEMOGLOBIN FAMILY MEMBER"/>
    <property type="match status" value="1"/>
</dbReference>
<dbReference type="PANTHER" id="PTHR11442:SF52">
    <property type="entry name" value="HEMOGLOBIN SUBUNIT GAMMA-1"/>
    <property type="match status" value="1"/>
</dbReference>
<dbReference type="Pfam" id="PF00042">
    <property type="entry name" value="Globin"/>
    <property type="match status" value="1"/>
</dbReference>
<dbReference type="PRINTS" id="PR00814">
    <property type="entry name" value="BETAHAEM"/>
</dbReference>
<dbReference type="SUPFAM" id="SSF46458">
    <property type="entry name" value="Globin-like"/>
    <property type="match status" value="1"/>
</dbReference>
<dbReference type="PROSITE" id="PS01033">
    <property type="entry name" value="GLOBIN"/>
    <property type="match status" value="1"/>
</dbReference>
<protein>
    <recommendedName>
        <fullName>Hemoglobin subunit gamma-2</fullName>
    </recommendedName>
    <alternativeName>
        <fullName>Gamma-2-globin</fullName>
    </alternativeName>
    <alternativeName>
        <fullName>Hemoglobin gamma-2 chain</fullName>
    </alternativeName>
</protein>
<gene>
    <name type="primary">HBG2</name>
</gene>
<name>HBG2_CEBAL</name>
<organism>
    <name type="scientific">Cebus albifrons</name>
    <name type="common">White-fronted capuchin</name>
    <dbReference type="NCBI Taxonomy" id="9514"/>
    <lineage>
        <taxon>Eukaryota</taxon>
        <taxon>Metazoa</taxon>
        <taxon>Chordata</taxon>
        <taxon>Craniata</taxon>
        <taxon>Vertebrata</taxon>
        <taxon>Euteleostomi</taxon>
        <taxon>Mammalia</taxon>
        <taxon>Eutheria</taxon>
        <taxon>Euarchontoglires</taxon>
        <taxon>Primates</taxon>
        <taxon>Haplorrhini</taxon>
        <taxon>Platyrrhini</taxon>
        <taxon>Cebidae</taxon>
        <taxon>Cebinae</taxon>
        <taxon>Cebus</taxon>
    </lineage>
</organism>
<feature type="chain" id="PRO_0000053243" description="Hemoglobin subunit gamma-2">
    <location>
        <begin position="1"/>
        <end position="147"/>
    </location>
</feature>
<feature type="domain" description="Globin" evidence="3">
    <location>
        <begin position="3"/>
        <end position="147"/>
    </location>
</feature>
<feature type="binding site" description="distal binding residue" evidence="3">
    <location>
        <position position="64"/>
    </location>
    <ligand>
        <name>heme b</name>
        <dbReference type="ChEBI" id="CHEBI:60344"/>
    </ligand>
    <ligandPart>
        <name>Fe</name>
        <dbReference type="ChEBI" id="CHEBI:18248"/>
    </ligandPart>
</feature>
<feature type="binding site" description="proximal binding residue" evidence="3">
    <location>
        <position position="93"/>
    </location>
    <ligand>
        <name>heme b</name>
        <dbReference type="ChEBI" id="CHEBI:60344"/>
    </ligand>
    <ligandPart>
        <name>Fe</name>
        <dbReference type="ChEBI" id="CHEBI:18248"/>
    </ligandPart>
</feature>
<feature type="modified residue" description="Phosphothreonine" evidence="1">
    <location>
        <position position="13"/>
    </location>
</feature>
<feature type="modified residue" description="Phosphoserine" evidence="2">
    <location>
        <position position="45"/>
    </location>
</feature>
<feature type="modified residue" description="Phosphoserine" evidence="2">
    <location>
        <position position="51"/>
    </location>
</feature>
<feature type="modified residue" description="Phosphoserine" evidence="2">
    <location>
        <position position="53"/>
    </location>
</feature>
<feature type="modified residue" description="N6-acetyllysine" evidence="1">
    <location>
        <position position="60"/>
    </location>
</feature>
<feature type="modified residue" description="N6-acetyllysine" evidence="1">
    <location>
        <position position="83"/>
    </location>
</feature>
<feature type="modified residue" description="S-nitrosocysteine" evidence="1">
    <location>
        <position position="94"/>
    </location>
</feature>
<feature type="modified residue" description="Phosphoserine" evidence="2">
    <location>
        <position position="140"/>
    </location>
</feature>
<feature type="modified residue" description="Phosphoserine" evidence="2">
    <location>
        <position position="144"/>
    </location>
</feature>
<proteinExistence type="evidence at transcript level"/>
<evidence type="ECO:0000250" key="1">
    <source>
        <dbReference type="UniProtKB" id="P68871"/>
    </source>
</evidence>
<evidence type="ECO:0000250" key="2">
    <source>
        <dbReference type="UniProtKB" id="P69892"/>
    </source>
</evidence>
<evidence type="ECO:0000255" key="3">
    <source>
        <dbReference type="PROSITE-ProRule" id="PRU00238"/>
    </source>
</evidence>
<reference key="1">
    <citation type="journal article" date="1993" name="Genomics">
        <title>The gamma-globin genes and their flanking sequences in primates: findings with nucleotide sequences of capuchin monkey and tarsier.</title>
        <authorList>
            <person name="Hayasaka K."/>
            <person name="Skinner C.G."/>
            <person name="Goodman M."/>
            <person name="Slightom J.L."/>
        </authorList>
    </citation>
    <scope>NUCLEOTIDE SEQUENCE</scope>
</reference>
<sequence length="147" mass="15936">MSNFTAEDKAAITSLWAKVNVEDAGGETLGRLLVVYPWTQRFFDSFGSLSSPSAIMGNPKVKAHGAKVLTSLGEAIKNLDDLKGTFGQLSELHCDKLHVDPENFRLLGNVLVTVLAIHHGKEFTPEVQASWQKMVAGVASALGSRYH</sequence>
<keyword id="KW-0007">Acetylation</keyword>
<keyword id="KW-0349">Heme</keyword>
<keyword id="KW-0408">Iron</keyword>
<keyword id="KW-0479">Metal-binding</keyword>
<keyword id="KW-0561">Oxygen transport</keyword>
<keyword id="KW-0597">Phosphoprotein</keyword>
<keyword id="KW-0702">S-nitrosylation</keyword>
<keyword id="KW-0813">Transport</keyword>
<comment type="function">
    <text evidence="2">Gamma chains make up the fetal hemoglobin F, in combination with alpha chains.</text>
</comment>
<comment type="subunit">
    <text evidence="2">Heterotetramer of two alpha chains and two gamma chains in fetal hemoglobin (Hb F).</text>
</comment>
<comment type="tissue specificity">
    <text>Red blood cells.</text>
</comment>
<comment type="similarity">
    <text evidence="3">Belongs to the globin family.</text>
</comment>
<accession>P68258</accession>
<accession>Q28225</accession>
<accession>Q29434</accession>